<organism>
    <name type="scientific">Escherichia coli O139:H28 (strain E24377A / ETEC)</name>
    <dbReference type="NCBI Taxonomy" id="331111"/>
    <lineage>
        <taxon>Bacteria</taxon>
        <taxon>Pseudomonadati</taxon>
        <taxon>Pseudomonadota</taxon>
        <taxon>Gammaproteobacteria</taxon>
        <taxon>Enterobacterales</taxon>
        <taxon>Enterobacteriaceae</taxon>
        <taxon>Escherichia</taxon>
    </lineage>
</organism>
<dbReference type="EC" id="4.2.99.20" evidence="1"/>
<dbReference type="EMBL" id="CP000800">
    <property type="protein sequence ID" value="ABV20817.1"/>
    <property type="molecule type" value="Genomic_DNA"/>
</dbReference>
<dbReference type="RefSeq" id="WP_000600496.1">
    <property type="nucleotide sequence ID" value="NC_009801.1"/>
</dbReference>
<dbReference type="SMR" id="A7ZP82"/>
<dbReference type="ESTHER" id="ecoli-YFBB">
    <property type="family name" value="MenH_SHCHC"/>
</dbReference>
<dbReference type="MEROPS" id="S33.996"/>
<dbReference type="GeneID" id="75205686"/>
<dbReference type="KEGG" id="ecw:EcE24377A_2559"/>
<dbReference type="HOGENOM" id="CLU_020336_38_2_6"/>
<dbReference type="UniPathway" id="UPA00079"/>
<dbReference type="UniPathway" id="UPA01057">
    <property type="reaction ID" value="UER00900"/>
</dbReference>
<dbReference type="Proteomes" id="UP000001122">
    <property type="component" value="Chromosome"/>
</dbReference>
<dbReference type="GO" id="GO:0070205">
    <property type="term" value="F:2-succinyl-6-hydroxy-2,4-cyclohexadiene-1-carboxylate synthase activity"/>
    <property type="evidence" value="ECO:0007669"/>
    <property type="project" value="UniProtKB-UniRule"/>
</dbReference>
<dbReference type="GO" id="GO:0009234">
    <property type="term" value="P:menaquinone biosynthetic process"/>
    <property type="evidence" value="ECO:0007669"/>
    <property type="project" value="UniProtKB-UniRule"/>
</dbReference>
<dbReference type="FunFam" id="3.40.50.1820:FF:000038">
    <property type="entry name" value="2-succinyl-6-hydroxy-2,4-cyclohexadiene-1-carboxylate synthase"/>
    <property type="match status" value="1"/>
</dbReference>
<dbReference type="Gene3D" id="3.40.50.1820">
    <property type="entry name" value="alpha/beta hydrolase"/>
    <property type="match status" value="1"/>
</dbReference>
<dbReference type="HAMAP" id="MF_01660">
    <property type="entry name" value="MenH"/>
    <property type="match status" value="1"/>
</dbReference>
<dbReference type="InterPro" id="IPR000073">
    <property type="entry name" value="AB_hydrolase_1"/>
</dbReference>
<dbReference type="InterPro" id="IPR029058">
    <property type="entry name" value="AB_hydrolase_fold"/>
</dbReference>
<dbReference type="InterPro" id="IPR022485">
    <property type="entry name" value="SHCHC_synthase_MenH"/>
</dbReference>
<dbReference type="NCBIfam" id="TIGR03695">
    <property type="entry name" value="menH_SHCHC"/>
    <property type="match status" value="1"/>
</dbReference>
<dbReference type="NCBIfam" id="NF008340">
    <property type="entry name" value="PRK11126.1"/>
    <property type="match status" value="1"/>
</dbReference>
<dbReference type="PANTHER" id="PTHR42916">
    <property type="entry name" value="2-SUCCINYL-5-ENOLPYRUVYL-6-HYDROXY-3-CYCLOHEXENE-1-CARBOXYLATE SYNTHASE"/>
    <property type="match status" value="1"/>
</dbReference>
<dbReference type="PANTHER" id="PTHR42916:SF1">
    <property type="entry name" value="PROTEIN PHYLLO, CHLOROPLASTIC"/>
    <property type="match status" value="1"/>
</dbReference>
<dbReference type="Pfam" id="PF12697">
    <property type="entry name" value="Abhydrolase_6"/>
    <property type="match status" value="1"/>
</dbReference>
<dbReference type="SUPFAM" id="SSF53474">
    <property type="entry name" value="alpha/beta-Hydrolases"/>
    <property type="match status" value="1"/>
</dbReference>
<gene>
    <name evidence="1" type="primary">menH</name>
    <name type="ordered locus">EcE24377A_2559</name>
</gene>
<comment type="function">
    <text evidence="1">Catalyzes a proton abstraction reaction that results in 2,5-elimination of pyruvate from 2-succinyl-5-enolpyruvyl-6-hydroxy-3-cyclohexene-1-carboxylate (SEPHCHC) and the formation of 2-succinyl-6-hydroxy-2,4-cyclohexadiene-1-carboxylate (SHCHC).</text>
</comment>
<comment type="catalytic activity">
    <reaction evidence="1">
        <text>5-enolpyruvoyl-6-hydroxy-2-succinyl-cyclohex-3-ene-1-carboxylate = (1R,6R)-6-hydroxy-2-succinyl-cyclohexa-2,4-diene-1-carboxylate + pyruvate</text>
        <dbReference type="Rhea" id="RHEA:25597"/>
        <dbReference type="ChEBI" id="CHEBI:15361"/>
        <dbReference type="ChEBI" id="CHEBI:58689"/>
        <dbReference type="ChEBI" id="CHEBI:58818"/>
        <dbReference type="EC" id="4.2.99.20"/>
    </reaction>
</comment>
<comment type="pathway">
    <text evidence="1">Quinol/quinone metabolism; 1,4-dihydroxy-2-naphthoate biosynthesis; 1,4-dihydroxy-2-naphthoate from chorismate: step 3/7.</text>
</comment>
<comment type="pathway">
    <text evidence="1">Quinol/quinone metabolism; menaquinone biosynthesis.</text>
</comment>
<comment type="subunit">
    <text evidence="1">Monomer.</text>
</comment>
<comment type="similarity">
    <text evidence="1">Belongs to the AB hydrolase superfamily. MenH family.</text>
</comment>
<reference key="1">
    <citation type="journal article" date="2008" name="J. Bacteriol.">
        <title>The pangenome structure of Escherichia coli: comparative genomic analysis of E. coli commensal and pathogenic isolates.</title>
        <authorList>
            <person name="Rasko D.A."/>
            <person name="Rosovitz M.J."/>
            <person name="Myers G.S.A."/>
            <person name="Mongodin E.F."/>
            <person name="Fricke W.F."/>
            <person name="Gajer P."/>
            <person name="Crabtree J."/>
            <person name="Sebaihia M."/>
            <person name="Thomson N.R."/>
            <person name="Chaudhuri R."/>
            <person name="Henderson I.R."/>
            <person name="Sperandio V."/>
            <person name="Ravel J."/>
        </authorList>
    </citation>
    <scope>NUCLEOTIDE SEQUENCE [LARGE SCALE GENOMIC DNA]</scope>
    <source>
        <strain>E24377A / ETEC</strain>
    </source>
</reference>
<sequence>MILHAQAKHGKPGLPWLVFLHGFSGDCHEWQEVGEAFADYSRLYVDLPGHGGSAAISVDGFDDVTDLLRKTLVSYNILDFWLVGYSLGGRVAMMAACQGLAGLCGVIVEGGHPGLQNAEQRAERQRSDRQWAQRFRTEPLTAVFADWYQQPVFASLNDDQRRELVALRSNNNGATLAAMLEATSLAVQPDLRANLSARTFAFYYLCGERDSKFRALAAELAADCHVIPRAGHNAHRENPAGVIASLAQILRF</sequence>
<name>MENH_ECO24</name>
<proteinExistence type="inferred from homology"/>
<accession>A7ZP82</accession>
<evidence type="ECO:0000255" key="1">
    <source>
        <dbReference type="HAMAP-Rule" id="MF_01660"/>
    </source>
</evidence>
<feature type="chain" id="PRO_0000341909" description="2-succinyl-6-hydroxy-2,4-cyclohexadiene-1-carboxylate synthase">
    <location>
        <begin position="1"/>
        <end position="252"/>
    </location>
</feature>
<keyword id="KW-0456">Lyase</keyword>
<keyword id="KW-0474">Menaquinone biosynthesis</keyword>
<keyword id="KW-1185">Reference proteome</keyword>
<protein>
    <recommendedName>
        <fullName evidence="1">2-succinyl-6-hydroxy-2,4-cyclohexadiene-1-carboxylate synthase</fullName>
        <shortName evidence="1">SHCHC synthase</shortName>
        <ecNumber evidence="1">4.2.99.20</ecNumber>
    </recommendedName>
</protein>